<comment type="function">
    <text evidence="1">Catalyzes the irreversible transfer of a propylamine group from the amino donor S-adenosylmethioninamine (decarboxy-AdoMet) to putrescine (1,4-diaminobutane) to yield spermidine.</text>
</comment>
<comment type="catalytic activity">
    <reaction evidence="1">
        <text>S-adenosyl 3-(methylsulfanyl)propylamine + putrescine = S-methyl-5'-thioadenosine + spermidine + H(+)</text>
        <dbReference type="Rhea" id="RHEA:12721"/>
        <dbReference type="ChEBI" id="CHEBI:15378"/>
        <dbReference type="ChEBI" id="CHEBI:17509"/>
        <dbReference type="ChEBI" id="CHEBI:57443"/>
        <dbReference type="ChEBI" id="CHEBI:57834"/>
        <dbReference type="ChEBI" id="CHEBI:326268"/>
        <dbReference type="EC" id="2.5.1.16"/>
    </reaction>
</comment>
<comment type="pathway">
    <text evidence="1">Amine and polyamine biosynthesis; spermidine biosynthesis; spermidine from putrescine: step 1/1.</text>
</comment>
<comment type="subunit">
    <text evidence="1">Homodimer or homotetramer.</text>
</comment>
<comment type="subcellular location">
    <subcellularLocation>
        <location evidence="1">Cytoplasm</location>
    </subcellularLocation>
</comment>
<comment type="similarity">
    <text evidence="1">Belongs to the spermidine/spermine synthase family.</text>
</comment>
<name>SPEE_SALTI</name>
<dbReference type="EC" id="2.5.1.16" evidence="1"/>
<dbReference type="EMBL" id="AL513382">
    <property type="protein sequence ID" value="CAD01324.1"/>
    <property type="molecule type" value="Genomic_DNA"/>
</dbReference>
<dbReference type="EMBL" id="AE014613">
    <property type="protein sequence ID" value="AAO67903.1"/>
    <property type="molecule type" value="Genomic_DNA"/>
</dbReference>
<dbReference type="RefSeq" id="NP_454779.1">
    <property type="nucleotide sequence ID" value="NC_003198.1"/>
</dbReference>
<dbReference type="RefSeq" id="WP_000829972.1">
    <property type="nucleotide sequence ID" value="NZ_WSUR01000009.1"/>
</dbReference>
<dbReference type="SMR" id="Q8Z9E2"/>
<dbReference type="STRING" id="220341.gene:17584226"/>
<dbReference type="KEGG" id="stt:t0171"/>
<dbReference type="KEGG" id="sty:STY0188"/>
<dbReference type="PATRIC" id="fig|220341.7.peg.191"/>
<dbReference type="eggNOG" id="COG0421">
    <property type="taxonomic scope" value="Bacteria"/>
</dbReference>
<dbReference type="HOGENOM" id="CLU_048199_0_0_6"/>
<dbReference type="OMA" id="FLYHEMM"/>
<dbReference type="OrthoDB" id="9793120at2"/>
<dbReference type="UniPathway" id="UPA00248">
    <property type="reaction ID" value="UER00314"/>
</dbReference>
<dbReference type="Proteomes" id="UP000000541">
    <property type="component" value="Chromosome"/>
</dbReference>
<dbReference type="Proteomes" id="UP000002670">
    <property type="component" value="Chromosome"/>
</dbReference>
<dbReference type="GO" id="GO:0005829">
    <property type="term" value="C:cytosol"/>
    <property type="evidence" value="ECO:0007669"/>
    <property type="project" value="TreeGrafter"/>
</dbReference>
<dbReference type="GO" id="GO:0004766">
    <property type="term" value="F:spermidine synthase activity"/>
    <property type="evidence" value="ECO:0007669"/>
    <property type="project" value="UniProtKB-UniRule"/>
</dbReference>
<dbReference type="GO" id="GO:0008295">
    <property type="term" value="P:spermidine biosynthetic process"/>
    <property type="evidence" value="ECO:0007669"/>
    <property type="project" value="UniProtKB-UniRule"/>
</dbReference>
<dbReference type="CDD" id="cd02440">
    <property type="entry name" value="AdoMet_MTases"/>
    <property type="match status" value="1"/>
</dbReference>
<dbReference type="FunFam" id="2.30.140.10:FF:000002">
    <property type="entry name" value="Polyamine aminopropyltransferase"/>
    <property type="match status" value="1"/>
</dbReference>
<dbReference type="FunFam" id="3.40.50.150:FF:000026">
    <property type="entry name" value="Polyamine aminopropyltransferase"/>
    <property type="match status" value="1"/>
</dbReference>
<dbReference type="Gene3D" id="2.30.140.10">
    <property type="entry name" value="Spermidine synthase, tetramerisation domain"/>
    <property type="match status" value="1"/>
</dbReference>
<dbReference type="Gene3D" id="3.40.50.150">
    <property type="entry name" value="Vaccinia Virus protein VP39"/>
    <property type="match status" value="1"/>
</dbReference>
<dbReference type="HAMAP" id="MF_00198">
    <property type="entry name" value="Spermidine_synth"/>
    <property type="match status" value="1"/>
</dbReference>
<dbReference type="InterPro" id="IPR030374">
    <property type="entry name" value="PABS"/>
</dbReference>
<dbReference type="InterPro" id="IPR030373">
    <property type="entry name" value="PABS_CS"/>
</dbReference>
<dbReference type="InterPro" id="IPR029063">
    <property type="entry name" value="SAM-dependent_MTases_sf"/>
</dbReference>
<dbReference type="InterPro" id="IPR001045">
    <property type="entry name" value="Spermi_synthase"/>
</dbReference>
<dbReference type="InterPro" id="IPR035246">
    <property type="entry name" value="Spermidine_synt_N"/>
</dbReference>
<dbReference type="InterPro" id="IPR037163">
    <property type="entry name" value="Spermidine_synt_N_sf"/>
</dbReference>
<dbReference type="NCBIfam" id="NF037959">
    <property type="entry name" value="MFS_SpdSyn"/>
    <property type="match status" value="1"/>
</dbReference>
<dbReference type="NCBIfam" id="NF002010">
    <property type="entry name" value="PRK00811.1"/>
    <property type="match status" value="1"/>
</dbReference>
<dbReference type="NCBIfam" id="TIGR00417">
    <property type="entry name" value="speE"/>
    <property type="match status" value="1"/>
</dbReference>
<dbReference type="PANTHER" id="PTHR11558:SF11">
    <property type="entry name" value="SPERMIDINE SYNTHASE"/>
    <property type="match status" value="1"/>
</dbReference>
<dbReference type="PANTHER" id="PTHR11558">
    <property type="entry name" value="SPERMIDINE/SPERMINE SYNTHASE"/>
    <property type="match status" value="1"/>
</dbReference>
<dbReference type="Pfam" id="PF17284">
    <property type="entry name" value="Spermine_synt_N"/>
    <property type="match status" value="1"/>
</dbReference>
<dbReference type="Pfam" id="PF01564">
    <property type="entry name" value="Spermine_synth"/>
    <property type="match status" value="1"/>
</dbReference>
<dbReference type="SUPFAM" id="SSF53335">
    <property type="entry name" value="S-adenosyl-L-methionine-dependent methyltransferases"/>
    <property type="match status" value="1"/>
</dbReference>
<dbReference type="PROSITE" id="PS01330">
    <property type="entry name" value="PABS_1"/>
    <property type="match status" value="1"/>
</dbReference>
<dbReference type="PROSITE" id="PS51006">
    <property type="entry name" value="PABS_2"/>
    <property type="match status" value="1"/>
</dbReference>
<sequence length="286" mass="32085">MAENTMWHETLHDQFGQYFAVDNVLYHEKTDHQDLIIFENAAFGRVMALDGVVQTTERDEFIYHEMMTHVPLLAHGHAKHVLIIGGGDGAMLREVTRHKNVETITMVEIDAGVVSFCRQYLPNHNAGSYDDPRFTLVIDDGVNFVNQTHQTFDVIISDCTDPIGPGESLFTSAFYEGCKRCLNPGGIFVAQNGVCFLQQDEALDSHRKLSHYFSDVGFYQAAIPTYYGGIMTFAWATDNDALRHLSSEIIQARFHAAGLKCRYYNSAIHAAAFALPQYLHDALSAQ</sequence>
<keyword id="KW-0963">Cytoplasm</keyword>
<keyword id="KW-0620">Polyamine biosynthesis</keyword>
<keyword id="KW-0745">Spermidine biosynthesis</keyword>
<keyword id="KW-0808">Transferase</keyword>
<proteinExistence type="inferred from homology"/>
<organism>
    <name type="scientific">Salmonella typhi</name>
    <dbReference type="NCBI Taxonomy" id="90370"/>
    <lineage>
        <taxon>Bacteria</taxon>
        <taxon>Pseudomonadati</taxon>
        <taxon>Pseudomonadota</taxon>
        <taxon>Gammaproteobacteria</taxon>
        <taxon>Enterobacterales</taxon>
        <taxon>Enterobacteriaceae</taxon>
        <taxon>Salmonella</taxon>
    </lineage>
</organism>
<reference key="1">
    <citation type="journal article" date="2001" name="Nature">
        <title>Complete genome sequence of a multiple drug resistant Salmonella enterica serovar Typhi CT18.</title>
        <authorList>
            <person name="Parkhill J."/>
            <person name="Dougan G."/>
            <person name="James K.D."/>
            <person name="Thomson N.R."/>
            <person name="Pickard D."/>
            <person name="Wain J."/>
            <person name="Churcher C.M."/>
            <person name="Mungall K.L."/>
            <person name="Bentley S.D."/>
            <person name="Holden M.T.G."/>
            <person name="Sebaihia M."/>
            <person name="Baker S."/>
            <person name="Basham D."/>
            <person name="Brooks K."/>
            <person name="Chillingworth T."/>
            <person name="Connerton P."/>
            <person name="Cronin A."/>
            <person name="Davis P."/>
            <person name="Davies R.M."/>
            <person name="Dowd L."/>
            <person name="White N."/>
            <person name="Farrar J."/>
            <person name="Feltwell T."/>
            <person name="Hamlin N."/>
            <person name="Haque A."/>
            <person name="Hien T.T."/>
            <person name="Holroyd S."/>
            <person name="Jagels K."/>
            <person name="Krogh A."/>
            <person name="Larsen T.S."/>
            <person name="Leather S."/>
            <person name="Moule S."/>
            <person name="O'Gaora P."/>
            <person name="Parry C."/>
            <person name="Quail M.A."/>
            <person name="Rutherford K.M."/>
            <person name="Simmonds M."/>
            <person name="Skelton J."/>
            <person name="Stevens K."/>
            <person name="Whitehead S."/>
            <person name="Barrell B.G."/>
        </authorList>
    </citation>
    <scope>NUCLEOTIDE SEQUENCE [LARGE SCALE GENOMIC DNA]</scope>
    <source>
        <strain>CT18</strain>
    </source>
</reference>
<reference key="2">
    <citation type="journal article" date="2003" name="J. Bacteriol.">
        <title>Comparative genomics of Salmonella enterica serovar Typhi strains Ty2 and CT18.</title>
        <authorList>
            <person name="Deng W."/>
            <person name="Liou S.-R."/>
            <person name="Plunkett G. III"/>
            <person name="Mayhew G.F."/>
            <person name="Rose D.J."/>
            <person name="Burland V."/>
            <person name="Kodoyianni V."/>
            <person name="Schwartz D.C."/>
            <person name="Blattner F.R."/>
        </authorList>
    </citation>
    <scope>NUCLEOTIDE SEQUENCE [LARGE SCALE GENOMIC DNA]</scope>
    <source>
        <strain>ATCC 700931 / Ty2</strain>
    </source>
</reference>
<feature type="chain" id="PRO_0000156503" description="Polyamine aminopropyltransferase">
    <location>
        <begin position="1"/>
        <end position="286"/>
    </location>
</feature>
<feature type="domain" description="PABS" evidence="1">
    <location>
        <begin position="5"/>
        <end position="238"/>
    </location>
</feature>
<feature type="active site" description="Proton acceptor" evidence="1">
    <location>
        <position position="158"/>
    </location>
</feature>
<feature type="binding site" evidence="1">
    <location>
        <position position="33"/>
    </location>
    <ligand>
        <name>S-methyl-5'-thioadenosine</name>
        <dbReference type="ChEBI" id="CHEBI:17509"/>
    </ligand>
</feature>
<feature type="binding site" evidence="1">
    <location>
        <position position="64"/>
    </location>
    <ligand>
        <name>spermidine</name>
        <dbReference type="ChEBI" id="CHEBI:57834"/>
    </ligand>
</feature>
<feature type="binding site" evidence="1">
    <location>
        <position position="88"/>
    </location>
    <ligand>
        <name>spermidine</name>
        <dbReference type="ChEBI" id="CHEBI:57834"/>
    </ligand>
</feature>
<feature type="binding site" evidence="1">
    <location>
        <position position="108"/>
    </location>
    <ligand>
        <name>S-methyl-5'-thioadenosine</name>
        <dbReference type="ChEBI" id="CHEBI:17509"/>
    </ligand>
</feature>
<feature type="binding site" evidence="1">
    <location>
        <begin position="140"/>
        <end position="141"/>
    </location>
    <ligand>
        <name>S-methyl-5'-thioadenosine</name>
        <dbReference type="ChEBI" id="CHEBI:17509"/>
    </ligand>
</feature>
<feature type="binding site" evidence="1">
    <location>
        <begin position="158"/>
        <end position="161"/>
    </location>
    <ligand>
        <name>spermidine</name>
        <dbReference type="ChEBI" id="CHEBI:57834"/>
    </ligand>
</feature>
<feature type="binding site" evidence="1">
    <location>
        <position position="165"/>
    </location>
    <ligand>
        <name>S-methyl-5'-thioadenosine</name>
        <dbReference type="ChEBI" id="CHEBI:17509"/>
    </ligand>
</feature>
<evidence type="ECO:0000255" key="1">
    <source>
        <dbReference type="HAMAP-Rule" id="MF_00198"/>
    </source>
</evidence>
<protein>
    <recommendedName>
        <fullName evidence="1">Polyamine aminopropyltransferase</fullName>
    </recommendedName>
    <alternativeName>
        <fullName evidence="1">Putrescine aminopropyltransferase</fullName>
        <shortName evidence="1">PAPT</shortName>
    </alternativeName>
    <alternativeName>
        <fullName evidence="1">Spermidine synthase</fullName>
        <shortName evidence="1">SPDS</shortName>
        <shortName evidence="1">SPDSY</shortName>
        <ecNumber evidence="1">2.5.1.16</ecNumber>
    </alternativeName>
</protein>
<accession>Q8Z9E2</accession>
<gene>
    <name evidence="1" type="primary">speE</name>
    <name type="ordered locus">STY0188</name>
    <name type="ordered locus">t0171</name>
</gene>